<protein>
    <recommendedName>
        <fullName evidence="1">Large ribosomal subunit protein bL31B</fullName>
    </recommendedName>
    <alternativeName>
        <fullName evidence="2">50S ribosomal protein L31 type B</fullName>
    </alternativeName>
</protein>
<reference key="1">
    <citation type="journal article" date="2010" name="Genome Biol. Evol.">
        <title>Continuing evolution of Burkholderia mallei through genome reduction and large-scale rearrangements.</title>
        <authorList>
            <person name="Losada L."/>
            <person name="Ronning C.M."/>
            <person name="DeShazer D."/>
            <person name="Woods D."/>
            <person name="Fedorova N."/>
            <person name="Kim H.S."/>
            <person name="Shabalina S.A."/>
            <person name="Pearson T.R."/>
            <person name="Brinkac L."/>
            <person name="Tan P."/>
            <person name="Nandi T."/>
            <person name="Crabtree J."/>
            <person name="Badger J."/>
            <person name="Beckstrom-Sternberg S."/>
            <person name="Saqib M."/>
            <person name="Schutzer S.E."/>
            <person name="Keim P."/>
            <person name="Nierman W.C."/>
        </authorList>
    </citation>
    <scope>NUCLEOTIDE SEQUENCE [LARGE SCALE GENOMIC DNA]</scope>
    <source>
        <strain>NCTC 10229</strain>
    </source>
</reference>
<name>RL31B_BURM9</name>
<keyword id="KW-0687">Ribonucleoprotein</keyword>
<keyword id="KW-0689">Ribosomal protein</keyword>
<organism>
    <name type="scientific">Burkholderia mallei (strain NCTC 10229)</name>
    <dbReference type="NCBI Taxonomy" id="412022"/>
    <lineage>
        <taxon>Bacteria</taxon>
        <taxon>Pseudomonadati</taxon>
        <taxon>Pseudomonadota</taxon>
        <taxon>Betaproteobacteria</taxon>
        <taxon>Burkholderiales</taxon>
        <taxon>Burkholderiaceae</taxon>
        <taxon>Burkholderia</taxon>
        <taxon>pseudomallei group</taxon>
    </lineage>
</organism>
<comment type="subunit">
    <text evidence="1">Part of the 50S ribosomal subunit.</text>
</comment>
<comment type="similarity">
    <text evidence="1">Belongs to the bacterial ribosomal protein bL31 family. Type B subfamily.</text>
</comment>
<accession>A2S278</accession>
<dbReference type="EMBL" id="CP000546">
    <property type="protein sequence ID" value="ABN01378.1"/>
    <property type="molecule type" value="Genomic_DNA"/>
</dbReference>
<dbReference type="RefSeq" id="WP_004193070.1">
    <property type="nucleotide sequence ID" value="NC_008836.1"/>
</dbReference>
<dbReference type="SMR" id="A2S278"/>
<dbReference type="KEGG" id="bml:BMA10229_A0037"/>
<dbReference type="HOGENOM" id="CLU_114306_2_1_4"/>
<dbReference type="Proteomes" id="UP000002283">
    <property type="component" value="Chromosome I"/>
</dbReference>
<dbReference type="GO" id="GO:1990904">
    <property type="term" value="C:ribonucleoprotein complex"/>
    <property type="evidence" value="ECO:0007669"/>
    <property type="project" value="UniProtKB-KW"/>
</dbReference>
<dbReference type="GO" id="GO:0005840">
    <property type="term" value="C:ribosome"/>
    <property type="evidence" value="ECO:0007669"/>
    <property type="project" value="UniProtKB-KW"/>
</dbReference>
<dbReference type="GO" id="GO:0003735">
    <property type="term" value="F:structural constituent of ribosome"/>
    <property type="evidence" value="ECO:0007669"/>
    <property type="project" value="InterPro"/>
</dbReference>
<dbReference type="GO" id="GO:0006412">
    <property type="term" value="P:translation"/>
    <property type="evidence" value="ECO:0007669"/>
    <property type="project" value="UniProtKB-UniRule"/>
</dbReference>
<dbReference type="Gene3D" id="4.10.830.30">
    <property type="entry name" value="Ribosomal protein L31"/>
    <property type="match status" value="1"/>
</dbReference>
<dbReference type="HAMAP" id="MF_00502">
    <property type="entry name" value="Ribosomal_bL31_2"/>
    <property type="match status" value="1"/>
</dbReference>
<dbReference type="InterPro" id="IPR034704">
    <property type="entry name" value="Ribosomal_bL28/bL31-like_sf"/>
</dbReference>
<dbReference type="InterPro" id="IPR002150">
    <property type="entry name" value="Ribosomal_bL31"/>
</dbReference>
<dbReference type="InterPro" id="IPR027493">
    <property type="entry name" value="Ribosomal_bL31_B"/>
</dbReference>
<dbReference type="InterPro" id="IPR042105">
    <property type="entry name" value="Ribosomal_bL31_sf"/>
</dbReference>
<dbReference type="NCBIfam" id="TIGR00105">
    <property type="entry name" value="L31"/>
    <property type="match status" value="1"/>
</dbReference>
<dbReference type="NCBIfam" id="NF002462">
    <property type="entry name" value="PRK01678.1"/>
    <property type="match status" value="1"/>
</dbReference>
<dbReference type="PANTHER" id="PTHR33280">
    <property type="entry name" value="50S RIBOSOMAL PROTEIN L31, CHLOROPLASTIC"/>
    <property type="match status" value="1"/>
</dbReference>
<dbReference type="PANTHER" id="PTHR33280:SF1">
    <property type="entry name" value="LARGE RIBOSOMAL SUBUNIT PROTEIN BL31C"/>
    <property type="match status" value="1"/>
</dbReference>
<dbReference type="Pfam" id="PF01197">
    <property type="entry name" value="Ribosomal_L31"/>
    <property type="match status" value="1"/>
</dbReference>
<dbReference type="PRINTS" id="PR01249">
    <property type="entry name" value="RIBOSOMALL31"/>
</dbReference>
<dbReference type="SUPFAM" id="SSF143800">
    <property type="entry name" value="L28p-like"/>
    <property type="match status" value="1"/>
</dbReference>
<evidence type="ECO:0000255" key="1">
    <source>
        <dbReference type="HAMAP-Rule" id="MF_00502"/>
    </source>
</evidence>
<evidence type="ECO:0000305" key="2"/>
<sequence>MKQGIHPDYREVVFQDMSNGFKFITRSTIQTRETIEFEGKTYPLAKIEVSSESHSFYTGQQKIMDTAGRVEKFKNKFGARASGKAAK</sequence>
<proteinExistence type="inferred from homology"/>
<feature type="chain" id="PRO_1000014689" description="Large ribosomal subunit protein bL31B">
    <location>
        <begin position="1"/>
        <end position="87"/>
    </location>
</feature>
<gene>
    <name evidence="1" type="primary">rpmE2</name>
    <name type="ordered locus">BMA10229_A0037</name>
</gene>